<evidence type="ECO:0000255" key="1">
    <source>
        <dbReference type="HAMAP-Rule" id="MF_00201"/>
    </source>
</evidence>
<feature type="chain" id="PRO_0000204997" description="DNA repair protein RecO">
    <location>
        <begin position="1"/>
        <end position="250"/>
    </location>
</feature>
<reference key="1">
    <citation type="journal article" date="2001" name="Lancet">
        <title>Whole genome sequencing of meticillin-resistant Staphylococcus aureus.</title>
        <authorList>
            <person name="Kuroda M."/>
            <person name="Ohta T."/>
            <person name="Uchiyama I."/>
            <person name="Baba T."/>
            <person name="Yuzawa H."/>
            <person name="Kobayashi I."/>
            <person name="Cui L."/>
            <person name="Oguchi A."/>
            <person name="Aoki K."/>
            <person name="Nagai Y."/>
            <person name="Lian J.-Q."/>
            <person name="Ito T."/>
            <person name="Kanamori M."/>
            <person name="Matsumaru H."/>
            <person name="Maruyama A."/>
            <person name="Murakami H."/>
            <person name="Hosoyama A."/>
            <person name="Mizutani-Ui Y."/>
            <person name="Takahashi N.K."/>
            <person name="Sawano T."/>
            <person name="Inoue R."/>
            <person name="Kaito C."/>
            <person name="Sekimizu K."/>
            <person name="Hirakawa H."/>
            <person name="Kuhara S."/>
            <person name="Goto S."/>
            <person name="Yabuzaki J."/>
            <person name="Kanehisa M."/>
            <person name="Yamashita A."/>
            <person name="Oshima K."/>
            <person name="Furuya K."/>
            <person name="Yoshino C."/>
            <person name="Shiba T."/>
            <person name="Hattori M."/>
            <person name="Ogasawara N."/>
            <person name="Hayashi H."/>
            <person name="Hiramatsu K."/>
        </authorList>
    </citation>
    <scope>NUCLEOTIDE SEQUENCE [LARGE SCALE GENOMIC DNA]</scope>
    <source>
        <strain>N315</strain>
    </source>
</reference>
<name>RECO_STAAN</name>
<organism>
    <name type="scientific">Staphylococcus aureus (strain N315)</name>
    <dbReference type="NCBI Taxonomy" id="158879"/>
    <lineage>
        <taxon>Bacteria</taxon>
        <taxon>Bacillati</taxon>
        <taxon>Bacillota</taxon>
        <taxon>Bacilli</taxon>
        <taxon>Bacillales</taxon>
        <taxon>Staphylococcaceae</taxon>
        <taxon>Staphylococcus</taxon>
    </lineage>
</organism>
<comment type="function">
    <text evidence="1">Involved in DNA repair and RecF pathway recombination.</text>
</comment>
<comment type="similarity">
    <text evidence="1">Belongs to the RecO family.</text>
</comment>
<protein>
    <recommendedName>
        <fullName evidence="1">DNA repair protein RecO</fullName>
    </recommendedName>
    <alternativeName>
        <fullName evidence="1">Recombination protein O</fullName>
    </alternativeName>
</protein>
<gene>
    <name evidence="1" type="primary">recO</name>
    <name type="ordered locus">SA1395</name>
</gene>
<sequence length="250" mass="28466">MLMRQKGIIIKAVDYGESDKIITILNEHGAKVPLMARRAKKVKTGLQAQTQLFVYGLFIYNQWRGMGTLNSVDVISQHYKLQMDLYVSSYASLAAETIERSMDEGDIAPYNYQLLQFVLEKIESGTSAQLMSVVVMLKCMKRFGFTASFNRCAVSGNDTQADLIGYSFKFDGAISRQEASKDVHAVILSNKTLYLLDVLQKLPIDKMNSLNIHQEIIDEMSDIILMLYREYAGMFFKSQKLINQLKRLEQ</sequence>
<accession>P65986</accession>
<accession>Q99TT0</accession>
<proteinExistence type="inferred from homology"/>
<dbReference type="EMBL" id="BA000018">
    <property type="protein sequence ID" value="BAB42658.1"/>
    <property type="molecule type" value="Genomic_DNA"/>
</dbReference>
<dbReference type="PIR" id="E89937">
    <property type="entry name" value="E89937"/>
</dbReference>
<dbReference type="SMR" id="P65986"/>
<dbReference type="EnsemblBacteria" id="BAB42658">
    <property type="protein sequence ID" value="BAB42658"/>
    <property type="gene ID" value="BAB42658"/>
</dbReference>
<dbReference type="KEGG" id="sau:SA1395"/>
<dbReference type="HOGENOM" id="CLU_066632_4_0_9"/>
<dbReference type="GO" id="GO:0043590">
    <property type="term" value="C:bacterial nucleoid"/>
    <property type="evidence" value="ECO:0007669"/>
    <property type="project" value="TreeGrafter"/>
</dbReference>
<dbReference type="GO" id="GO:0006310">
    <property type="term" value="P:DNA recombination"/>
    <property type="evidence" value="ECO:0007669"/>
    <property type="project" value="UniProtKB-UniRule"/>
</dbReference>
<dbReference type="GO" id="GO:0006302">
    <property type="term" value="P:double-strand break repair"/>
    <property type="evidence" value="ECO:0007669"/>
    <property type="project" value="TreeGrafter"/>
</dbReference>
<dbReference type="Gene3D" id="2.40.50.140">
    <property type="entry name" value="Nucleic acid-binding proteins"/>
    <property type="match status" value="1"/>
</dbReference>
<dbReference type="Gene3D" id="1.20.1440.120">
    <property type="entry name" value="Recombination protein O, C-terminal domain"/>
    <property type="match status" value="1"/>
</dbReference>
<dbReference type="HAMAP" id="MF_00201">
    <property type="entry name" value="RecO"/>
    <property type="match status" value="1"/>
</dbReference>
<dbReference type="InterPro" id="IPR037278">
    <property type="entry name" value="ARFGAP/RecO"/>
</dbReference>
<dbReference type="InterPro" id="IPR022572">
    <property type="entry name" value="DNA_rep/recomb_RecO_N"/>
</dbReference>
<dbReference type="InterPro" id="IPR012340">
    <property type="entry name" value="NA-bd_OB-fold"/>
</dbReference>
<dbReference type="InterPro" id="IPR003717">
    <property type="entry name" value="RecO"/>
</dbReference>
<dbReference type="InterPro" id="IPR042242">
    <property type="entry name" value="RecO_C"/>
</dbReference>
<dbReference type="NCBIfam" id="TIGR00613">
    <property type="entry name" value="reco"/>
    <property type="match status" value="1"/>
</dbReference>
<dbReference type="PANTHER" id="PTHR33991">
    <property type="entry name" value="DNA REPAIR PROTEIN RECO"/>
    <property type="match status" value="1"/>
</dbReference>
<dbReference type="PANTHER" id="PTHR33991:SF1">
    <property type="entry name" value="DNA REPAIR PROTEIN RECO"/>
    <property type="match status" value="1"/>
</dbReference>
<dbReference type="Pfam" id="PF02565">
    <property type="entry name" value="RecO_C"/>
    <property type="match status" value="1"/>
</dbReference>
<dbReference type="Pfam" id="PF11967">
    <property type="entry name" value="RecO_N"/>
    <property type="match status" value="1"/>
</dbReference>
<dbReference type="SUPFAM" id="SSF57863">
    <property type="entry name" value="ArfGap/RecO-like zinc finger"/>
    <property type="match status" value="1"/>
</dbReference>
<dbReference type="SUPFAM" id="SSF50249">
    <property type="entry name" value="Nucleic acid-binding proteins"/>
    <property type="match status" value="1"/>
</dbReference>
<keyword id="KW-0227">DNA damage</keyword>
<keyword id="KW-0233">DNA recombination</keyword>
<keyword id="KW-0234">DNA repair</keyword>